<name>RL7_PARPJ</name>
<keyword id="KW-0687">Ribonucleoprotein</keyword>
<keyword id="KW-0689">Ribosomal protein</keyword>
<reference key="1">
    <citation type="journal article" date="2011" name="J. Bacteriol.">
        <title>Complete genome sequence of the plant growth-promoting endophyte Burkholderia phytofirmans strain PsJN.</title>
        <authorList>
            <person name="Weilharter A."/>
            <person name="Mitter B."/>
            <person name="Shin M.V."/>
            <person name="Chain P.S."/>
            <person name="Nowak J."/>
            <person name="Sessitsch A."/>
        </authorList>
    </citation>
    <scope>NUCLEOTIDE SEQUENCE [LARGE SCALE GENOMIC DNA]</scope>
    <source>
        <strain>DSM 17436 / LMG 22146 / PsJN</strain>
    </source>
</reference>
<comment type="function">
    <text evidence="1">Forms part of the ribosomal stalk which helps the ribosome interact with GTP-bound translation factors. Is thus essential for accurate translation.</text>
</comment>
<comment type="subunit">
    <text evidence="1">Homodimer. Part of the ribosomal stalk of the 50S ribosomal subunit. Forms a multimeric L10(L12)X complex, where L10 forms an elongated spine to which 2 to 4 L12 dimers bind in a sequential fashion. Binds GTP-bound translation factors.</text>
</comment>
<comment type="similarity">
    <text evidence="1">Belongs to the bacterial ribosomal protein bL12 family.</text>
</comment>
<gene>
    <name evidence="1" type="primary">rplL</name>
    <name type="ordered locus">Bphyt_3653</name>
</gene>
<accession>B2T760</accession>
<proteinExistence type="inferred from homology"/>
<sequence>MAIAKEDILEAVSSMSVLELNELVKAFEEKFGVSAAAVAVAGPAGGGAAAAAEEQTEFTVNLTEVGANKVSVIKAVRELTGLGLKEAKDLVDGAPKPVKESVPKAAAEEAKKKLEEAGAKAEIK</sequence>
<feature type="chain" id="PRO_1000121406" description="Large ribosomal subunit protein bL12">
    <location>
        <begin position="1"/>
        <end position="124"/>
    </location>
</feature>
<feature type="region of interest" description="Disordered" evidence="2">
    <location>
        <begin position="94"/>
        <end position="124"/>
    </location>
</feature>
<protein>
    <recommendedName>
        <fullName evidence="1">Large ribosomal subunit protein bL12</fullName>
    </recommendedName>
    <alternativeName>
        <fullName evidence="3">50S ribosomal protein L7/L12</fullName>
    </alternativeName>
</protein>
<dbReference type="EMBL" id="CP001052">
    <property type="protein sequence ID" value="ACD18043.1"/>
    <property type="molecule type" value="Genomic_DNA"/>
</dbReference>
<dbReference type="RefSeq" id="WP_011490060.1">
    <property type="nucleotide sequence ID" value="NC_010681.1"/>
</dbReference>
<dbReference type="SMR" id="B2T760"/>
<dbReference type="STRING" id="398527.Bphyt_3653"/>
<dbReference type="GeneID" id="97311156"/>
<dbReference type="KEGG" id="bpy:Bphyt_3653"/>
<dbReference type="PATRIC" id="fig|266265.5.peg.4321"/>
<dbReference type="eggNOG" id="COG0222">
    <property type="taxonomic scope" value="Bacteria"/>
</dbReference>
<dbReference type="HOGENOM" id="CLU_086499_3_2_4"/>
<dbReference type="OrthoDB" id="9811748at2"/>
<dbReference type="Proteomes" id="UP000001739">
    <property type="component" value="Chromosome 1"/>
</dbReference>
<dbReference type="GO" id="GO:0022625">
    <property type="term" value="C:cytosolic large ribosomal subunit"/>
    <property type="evidence" value="ECO:0007669"/>
    <property type="project" value="TreeGrafter"/>
</dbReference>
<dbReference type="GO" id="GO:0003729">
    <property type="term" value="F:mRNA binding"/>
    <property type="evidence" value="ECO:0007669"/>
    <property type="project" value="TreeGrafter"/>
</dbReference>
<dbReference type="GO" id="GO:0003735">
    <property type="term" value="F:structural constituent of ribosome"/>
    <property type="evidence" value="ECO:0007669"/>
    <property type="project" value="InterPro"/>
</dbReference>
<dbReference type="GO" id="GO:0006412">
    <property type="term" value="P:translation"/>
    <property type="evidence" value="ECO:0007669"/>
    <property type="project" value="UniProtKB-UniRule"/>
</dbReference>
<dbReference type="CDD" id="cd00387">
    <property type="entry name" value="Ribosomal_L7_L12"/>
    <property type="match status" value="1"/>
</dbReference>
<dbReference type="FunFam" id="3.30.1390.10:FF:000001">
    <property type="entry name" value="50S ribosomal protein L7/L12"/>
    <property type="match status" value="1"/>
</dbReference>
<dbReference type="Gene3D" id="3.30.1390.10">
    <property type="match status" value="1"/>
</dbReference>
<dbReference type="Gene3D" id="1.20.5.710">
    <property type="entry name" value="Single helix bin"/>
    <property type="match status" value="1"/>
</dbReference>
<dbReference type="HAMAP" id="MF_00368">
    <property type="entry name" value="Ribosomal_bL12"/>
    <property type="match status" value="1"/>
</dbReference>
<dbReference type="InterPro" id="IPR000206">
    <property type="entry name" value="Ribosomal_bL12"/>
</dbReference>
<dbReference type="InterPro" id="IPR013823">
    <property type="entry name" value="Ribosomal_bL12_C"/>
</dbReference>
<dbReference type="InterPro" id="IPR014719">
    <property type="entry name" value="Ribosomal_bL12_C/ClpS-like"/>
</dbReference>
<dbReference type="InterPro" id="IPR008932">
    <property type="entry name" value="Ribosomal_bL12_oligo"/>
</dbReference>
<dbReference type="InterPro" id="IPR036235">
    <property type="entry name" value="Ribosomal_bL12_oligo_N_sf"/>
</dbReference>
<dbReference type="NCBIfam" id="TIGR00855">
    <property type="entry name" value="L12"/>
    <property type="match status" value="1"/>
</dbReference>
<dbReference type="PANTHER" id="PTHR45987">
    <property type="entry name" value="39S RIBOSOMAL PROTEIN L12"/>
    <property type="match status" value="1"/>
</dbReference>
<dbReference type="PANTHER" id="PTHR45987:SF4">
    <property type="entry name" value="LARGE RIBOSOMAL SUBUNIT PROTEIN BL12M"/>
    <property type="match status" value="1"/>
</dbReference>
<dbReference type="Pfam" id="PF00542">
    <property type="entry name" value="Ribosomal_L12"/>
    <property type="match status" value="1"/>
</dbReference>
<dbReference type="Pfam" id="PF16320">
    <property type="entry name" value="Ribosomal_L12_N"/>
    <property type="match status" value="1"/>
</dbReference>
<dbReference type="SUPFAM" id="SSF54736">
    <property type="entry name" value="ClpS-like"/>
    <property type="match status" value="1"/>
</dbReference>
<dbReference type="SUPFAM" id="SSF48300">
    <property type="entry name" value="Ribosomal protein L7/12, oligomerisation (N-terminal) domain"/>
    <property type="match status" value="1"/>
</dbReference>
<organism>
    <name type="scientific">Paraburkholderia phytofirmans (strain DSM 17436 / LMG 22146 / PsJN)</name>
    <name type="common">Burkholderia phytofirmans</name>
    <dbReference type="NCBI Taxonomy" id="398527"/>
    <lineage>
        <taxon>Bacteria</taxon>
        <taxon>Pseudomonadati</taxon>
        <taxon>Pseudomonadota</taxon>
        <taxon>Betaproteobacteria</taxon>
        <taxon>Burkholderiales</taxon>
        <taxon>Burkholderiaceae</taxon>
        <taxon>Paraburkholderia</taxon>
    </lineage>
</organism>
<evidence type="ECO:0000255" key="1">
    <source>
        <dbReference type="HAMAP-Rule" id="MF_00368"/>
    </source>
</evidence>
<evidence type="ECO:0000256" key="2">
    <source>
        <dbReference type="SAM" id="MobiDB-lite"/>
    </source>
</evidence>
<evidence type="ECO:0000305" key="3"/>